<evidence type="ECO:0000255" key="1">
    <source>
        <dbReference type="HAMAP-Rule" id="MF_00009"/>
    </source>
</evidence>
<name>YBEY_LEGPL</name>
<organism>
    <name type="scientific">Legionella pneumophila (strain Lens)</name>
    <dbReference type="NCBI Taxonomy" id="297245"/>
    <lineage>
        <taxon>Bacteria</taxon>
        <taxon>Pseudomonadati</taxon>
        <taxon>Pseudomonadota</taxon>
        <taxon>Gammaproteobacteria</taxon>
        <taxon>Legionellales</taxon>
        <taxon>Legionellaceae</taxon>
        <taxon>Legionella</taxon>
    </lineage>
</organism>
<reference key="1">
    <citation type="journal article" date="2004" name="Nat. Genet.">
        <title>Evidence in the Legionella pneumophila genome for exploitation of host cell functions and high genome plasticity.</title>
        <authorList>
            <person name="Cazalet C."/>
            <person name="Rusniok C."/>
            <person name="Brueggemann H."/>
            <person name="Zidane N."/>
            <person name="Magnier A."/>
            <person name="Ma L."/>
            <person name="Tichit M."/>
            <person name="Jarraud S."/>
            <person name="Bouchier C."/>
            <person name="Vandenesch F."/>
            <person name="Kunst F."/>
            <person name="Etienne J."/>
            <person name="Glaser P."/>
            <person name="Buchrieser C."/>
        </authorList>
    </citation>
    <scope>NUCLEOTIDE SEQUENCE [LARGE SCALE GENOMIC DNA]</scope>
    <source>
        <strain>Lens</strain>
    </source>
</reference>
<keyword id="KW-0963">Cytoplasm</keyword>
<keyword id="KW-0255">Endonuclease</keyword>
<keyword id="KW-0378">Hydrolase</keyword>
<keyword id="KW-0479">Metal-binding</keyword>
<keyword id="KW-0540">Nuclease</keyword>
<keyword id="KW-0690">Ribosome biogenesis</keyword>
<keyword id="KW-0698">rRNA processing</keyword>
<keyword id="KW-0862">Zinc</keyword>
<feature type="chain" id="PRO_0000102475" description="Endoribonuclease YbeY">
    <location>
        <begin position="1"/>
        <end position="158"/>
    </location>
</feature>
<feature type="binding site" evidence="1">
    <location>
        <position position="114"/>
    </location>
    <ligand>
        <name>Zn(2+)</name>
        <dbReference type="ChEBI" id="CHEBI:29105"/>
        <note>catalytic</note>
    </ligand>
</feature>
<feature type="binding site" evidence="1">
    <location>
        <position position="118"/>
    </location>
    <ligand>
        <name>Zn(2+)</name>
        <dbReference type="ChEBI" id="CHEBI:29105"/>
        <note>catalytic</note>
    </ligand>
</feature>
<feature type="binding site" evidence="1">
    <location>
        <position position="124"/>
    </location>
    <ligand>
        <name>Zn(2+)</name>
        <dbReference type="ChEBI" id="CHEBI:29105"/>
        <note>catalytic</note>
    </ligand>
</feature>
<protein>
    <recommendedName>
        <fullName evidence="1">Endoribonuclease YbeY</fullName>
        <ecNumber evidence="1">3.1.-.-</ecNumber>
    </recommendedName>
</protein>
<comment type="function">
    <text evidence="1">Single strand-specific metallo-endoribonuclease involved in late-stage 70S ribosome quality control and in maturation of the 3' terminus of the 16S rRNA.</text>
</comment>
<comment type="cofactor">
    <cofactor evidence="1">
        <name>Zn(2+)</name>
        <dbReference type="ChEBI" id="CHEBI:29105"/>
    </cofactor>
    <text evidence="1">Binds 1 zinc ion.</text>
</comment>
<comment type="subcellular location">
    <subcellularLocation>
        <location evidence="1">Cytoplasm</location>
    </subcellularLocation>
</comment>
<comment type="similarity">
    <text evidence="1">Belongs to the endoribonuclease YbeY family.</text>
</comment>
<dbReference type="EC" id="3.1.-.-" evidence="1"/>
<dbReference type="EMBL" id="CR628337">
    <property type="protein sequence ID" value="CAH15841.1"/>
    <property type="molecule type" value="Genomic_DNA"/>
</dbReference>
<dbReference type="RefSeq" id="WP_010947169.1">
    <property type="nucleotide sequence ID" value="NC_006369.1"/>
</dbReference>
<dbReference type="SMR" id="Q5WW59"/>
<dbReference type="GeneID" id="57035430"/>
<dbReference type="KEGG" id="lpf:lpl1601"/>
<dbReference type="LegioList" id="lpl1601"/>
<dbReference type="HOGENOM" id="CLU_106710_0_1_6"/>
<dbReference type="Proteomes" id="UP000002517">
    <property type="component" value="Chromosome"/>
</dbReference>
<dbReference type="GO" id="GO:0005737">
    <property type="term" value="C:cytoplasm"/>
    <property type="evidence" value="ECO:0007669"/>
    <property type="project" value="UniProtKB-SubCell"/>
</dbReference>
<dbReference type="GO" id="GO:0004222">
    <property type="term" value="F:metalloendopeptidase activity"/>
    <property type="evidence" value="ECO:0007669"/>
    <property type="project" value="InterPro"/>
</dbReference>
<dbReference type="GO" id="GO:0004521">
    <property type="term" value="F:RNA endonuclease activity"/>
    <property type="evidence" value="ECO:0007669"/>
    <property type="project" value="UniProtKB-UniRule"/>
</dbReference>
<dbReference type="GO" id="GO:0008270">
    <property type="term" value="F:zinc ion binding"/>
    <property type="evidence" value="ECO:0007669"/>
    <property type="project" value="UniProtKB-UniRule"/>
</dbReference>
<dbReference type="GO" id="GO:0006364">
    <property type="term" value="P:rRNA processing"/>
    <property type="evidence" value="ECO:0007669"/>
    <property type="project" value="UniProtKB-UniRule"/>
</dbReference>
<dbReference type="Gene3D" id="3.40.390.30">
    <property type="entry name" value="Metalloproteases ('zincins'), catalytic domain"/>
    <property type="match status" value="1"/>
</dbReference>
<dbReference type="HAMAP" id="MF_00009">
    <property type="entry name" value="Endoribonucl_YbeY"/>
    <property type="match status" value="1"/>
</dbReference>
<dbReference type="InterPro" id="IPR023091">
    <property type="entry name" value="MetalPrtase_cat_dom_sf_prd"/>
</dbReference>
<dbReference type="InterPro" id="IPR002036">
    <property type="entry name" value="YbeY"/>
</dbReference>
<dbReference type="InterPro" id="IPR020549">
    <property type="entry name" value="YbeY_CS"/>
</dbReference>
<dbReference type="NCBIfam" id="TIGR00043">
    <property type="entry name" value="rRNA maturation RNase YbeY"/>
    <property type="match status" value="1"/>
</dbReference>
<dbReference type="PANTHER" id="PTHR46986">
    <property type="entry name" value="ENDORIBONUCLEASE YBEY, CHLOROPLASTIC"/>
    <property type="match status" value="1"/>
</dbReference>
<dbReference type="PANTHER" id="PTHR46986:SF1">
    <property type="entry name" value="ENDORIBONUCLEASE YBEY, CHLOROPLASTIC"/>
    <property type="match status" value="1"/>
</dbReference>
<dbReference type="Pfam" id="PF02130">
    <property type="entry name" value="YbeY"/>
    <property type="match status" value="1"/>
</dbReference>
<dbReference type="SUPFAM" id="SSF55486">
    <property type="entry name" value="Metalloproteases ('zincins'), catalytic domain"/>
    <property type="match status" value="1"/>
</dbReference>
<dbReference type="PROSITE" id="PS01306">
    <property type="entry name" value="UPF0054"/>
    <property type="match status" value="1"/>
</dbReference>
<gene>
    <name evidence="1" type="primary">ybeY</name>
    <name type="ordered locus">lpl1601</name>
</gene>
<accession>Q5WW59</accession>
<sequence length="158" mass="17874">MTYHIDIQNATGKLLPLSEDEITKLASLALRDHKQDAELTVRLVDVEEMTYLNHTYRKKNKPTNVLAFPCSLPANIELECPLLGDVVICPEVLLAESAQFNKSLHAHWSLILIHGVLHLLGYDHIKDEEASIMQMLEAKLLAELGYANPYEVEENELE</sequence>
<proteinExistence type="inferred from homology"/>